<reference key="1">
    <citation type="journal article" date="2006" name="BMC Plant Biol.">
        <title>The complete chloroplast genome sequence of Citrus sinensis (L.) Osbeck var 'Ridge Pineapple': organization and phylogenetic relationships to other angiosperms.</title>
        <authorList>
            <person name="Bausher M.G."/>
            <person name="Singh N.D."/>
            <person name="Lee S.-B."/>
            <person name="Jansen R.K."/>
            <person name="Daniell H."/>
        </authorList>
    </citation>
    <scope>NUCLEOTIDE SEQUENCE [LARGE SCALE GENOMIC DNA]</scope>
    <source>
        <strain>cv. Osbeck var. Ridge Pineapple</strain>
    </source>
</reference>
<dbReference type="EC" id="1.10.3.9" evidence="1"/>
<dbReference type="EMBL" id="DQ864733">
    <property type="protein sequence ID" value="ABI49000.1"/>
    <property type="molecule type" value="Genomic_DNA"/>
</dbReference>
<dbReference type="RefSeq" id="YP_740455.1">
    <property type="nucleotide sequence ID" value="NC_008334.1"/>
</dbReference>
<dbReference type="SMR" id="Q09MJ8"/>
<dbReference type="GeneID" id="4271240"/>
<dbReference type="KEGG" id="cit:4271240"/>
<dbReference type="OrthoDB" id="896483at71240"/>
<dbReference type="GO" id="GO:0009535">
    <property type="term" value="C:chloroplast thylakoid membrane"/>
    <property type="evidence" value="ECO:0007669"/>
    <property type="project" value="UniProtKB-SubCell"/>
</dbReference>
<dbReference type="GO" id="GO:0009523">
    <property type="term" value="C:photosystem II"/>
    <property type="evidence" value="ECO:0007669"/>
    <property type="project" value="UniProtKB-KW"/>
</dbReference>
<dbReference type="GO" id="GO:0016168">
    <property type="term" value="F:chlorophyll binding"/>
    <property type="evidence" value="ECO:0007669"/>
    <property type="project" value="UniProtKB-UniRule"/>
</dbReference>
<dbReference type="GO" id="GO:0045156">
    <property type="term" value="F:electron transporter, transferring electrons within the cyclic electron transport pathway of photosynthesis activity"/>
    <property type="evidence" value="ECO:0007669"/>
    <property type="project" value="InterPro"/>
</dbReference>
<dbReference type="GO" id="GO:0005506">
    <property type="term" value="F:iron ion binding"/>
    <property type="evidence" value="ECO:0007669"/>
    <property type="project" value="UniProtKB-UniRule"/>
</dbReference>
<dbReference type="GO" id="GO:0016682">
    <property type="term" value="F:oxidoreductase activity, acting on diphenols and related substances as donors, oxygen as acceptor"/>
    <property type="evidence" value="ECO:0007669"/>
    <property type="project" value="UniProtKB-UniRule"/>
</dbReference>
<dbReference type="GO" id="GO:0010242">
    <property type="term" value="F:oxygen evolving activity"/>
    <property type="evidence" value="ECO:0007669"/>
    <property type="project" value="UniProtKB-EC"/>
</dbReference>
<dbReference type="GO" id="GO:0009772">
    <property type="term" value="P:photosynthetic electron transport in photosystem II"/>
    <property type="evidence" value="ECO:0007669"/>
    <property type="project" value="InterPro"/>
</dbReference>
<dbReference type="GO" id="GO:0009635">
    <property type="term" value="P:response to herbicide"/>
    <property type="evidence" value="ECO:0007669"/>
    <property type="project" value="UniProtKB-KW"/>
</dbReference>
<dbReference type="CDD" id="cd09289">
    <property type="entry name" value="Photosystem-II_D1"/>
    <property type="match status" value="1"/>
</dbReference>
<dbReference type="FunFam" id="1.20.85.10:FF:000002">
    <property type="entry name" value="Photosystem II protein D1"/>
    <property type="match status" value="1"/>
</dbReference>
<dbReference type="Gene3D" id="1.20.85.10">
    <property type="entry name" value="Photosystem II protein D1-like"/>
    <property type="match status" value="1"/>
</dbReference>
<dbReference type="HAMAP" id="MF_01379">
    <property type="entry name" value="PSII_PsbA_D1"/>
    <property type="match status" value="1"/>
</dbReference>
<dbReference type="InterPro" id="IPR055266">
    <property type="entry name" value="D1/D2"/>
</dbReference>
<dbReference type="InterPro" id="IPR036854">
    <property type="entry name" value="Photo_II_D1/D2_sf"/>
</dbReference>
<dbReference type="InterPro" id="IPR000484">
    <property type="entry name" value="Photo_RC_L/M"/>
</dbReference>
<dbReference type="InterPro" id="IPR055265">
    <property type="entry name" value="Photo_RC_L/M_CS"/>
</dbReference>
<dbReference type="InterPro" id="IPR005867">
    <property type="entry name" value="PSII_D1"/>
</dbReference>
<dbReference type="NCBIfam" id="TIGR01151">
    <property type="entry name" value="psbA"/>
    <property type="match status" value="1"/>
</dbReference>
<dbReference type="PANTHER" id="PTHR33149:SF12">
    <property type="entry name" value="PHOTOSYSTEM II D2 PROTEIN"/>
    <property type="match status" value="1"/>
</dbReference>
<dbReference type="PANTHER" id="PTHR33149">
    <property type="entry name" value="PHOTOSYSTEM II PROTEIN D1"/>
    <property type="match status" value="1"/>
</dbReference>
<dbReference type="Pfam" id="PF00124">
    <property type="entry name" value="Photo_RC"/>
    <property type="match status" value="1"/>
</dbReference>
<dbReference type="PRINTS" id="PR00256">
    <property type="entry name" value="REACTNCENTRE"/>
</dbReference>
<dbReference type="SUPFAM" id="SSF81483">
    <property type="entry name" value="Bacterial photosystem II reaction centre, L and M subunits"/>
    <property type="match status" value="1"/>
</dbReference>
<dbReference type="PROSITE" id="PS00244">
    <property type="entry name" value="REACTION_CENTER"/>
    <property type="match status" value="1"/>
</dbReference>
<keyword id="KW-0007">Acetylation</keyword>
<keyword id="KW-0106">Calcium</keyword>
<keyword id="KW-0148">Chlorophyll</keyword>
<keyword id="KW-0150">Chloroplast</keyword>
<keyword id="KW-0157">Chromophore</keyword>
<keyword id="KW-0249">Electron transport</keyword>
<keyword id="KW-0359">Herbicide resistance</keyword>
<keyword id="KW-0408">Iron</keyword>
<keyword id="KW-0460">Magnesium</keyword>
<keyword id="KW-0464">Manganese</keyword>
<keyword id="KW-0472">Membrane</keyword>
<keyword id="KW-0479">Metal-binding</keyword>
<keyword id="KW-0560">Oxidoreductase</keyword>
<keyword id="KW-0597">Phosphoprotein</keyword>
<keyword id="KW-0602">Photosynthesis</keyword>
<keyword id="KW-0604">Photosystem II</keyword>
<keyword id="KW-0934">Plastid</keyword>
<keyword id="KW-0793">Thylakoid</keyword>
<keyword id="KW-0812">Transmembrane</keyword>
<keyword id="KW-1133">Transmembrane helix</keyword>
<keyword id="KW-0813">Transport</keyword>
<comment type="function">
    <text evidence="1">Photosystem II (PSII) is a light-driven water:plastoquinone oxidoreductase that uses light energy to abstract electrons from H(2)O, generating O(2) and a proton gradient subsequently used for ATP formation. It consists of a core antenna complex that captures photons, and an electron transfer chain that converts photonic excitation into a charge separation. The D1/D2 (PsbA/PsbD) reaction center heterodimer binds P680, the primary electron donor of PSII as well as several subsequent electron acceptors.</text>
</comment>
<comment type="catalytic activity">
    <reaction evidence="1">
        <text>2 a plastoquinone + 4 hnu + 2 H2O = 2 a plastoquinol + O2</text>
        <dbReference type="Rhea" id="RHEA:36359"/>
        <dbReference type="Rhea" id="RHEA-COMP:9561"/>
        <dbReference type="Rhea" id="RHEA-COMP:9562"/>
        <dbReference type="ChEBI" id="CHEBI:15377"/>
        <dbReference type="ChEBI" id="CHEBI:15379"/>
        <dbReference type="ChEBI" id="CHEBI:17757"/>
        <dbReference type="ChEBI" id="CHEBI:30212"/>
        <dbReference type="ChEBI" id="CHEBI:62192"/>
        <dbReference type="EC" id="1.10.3.9"/>
    </reaction>
</comment>
<comment type="cofactor">
    <text evidence="1">The D1/D2 heterodimer binds P680, chlorophylls that are the primary electron donor of PSII, and subsequent electron acceptors. It shares a non-heme iron and each subunit binds pheophytin, quinone, additional chlorophylls, carotenoids and lipids. D1 provides most of the ligands for the Mn4-Ca-O5 cluster of the oxygen-evolving complex (OEC). There is also a Cl(-1) ion associated with D1 and D2, which is required for oxygen evolution. The PSII complex binds additional chlorophylls, carotenoids and specific lipids.</text>
</comment>
<comment type="subunit">
    <text evidence="1">PSII is composed of 1 copy each of membrane proteins PsbA, PsbB, PsbC, PsbD, PsbE, PsbF, PsbH, PsbI, PsbJ, PsbK, PsbL, PsbM, PsbT, PsbX, PsbY, PsbZ, Psb30/Ycf12, at least 3 peripheral proteins of the oxygen-evolving complex and a large number of cofactors. It forms dimeric complexes.</text>
</comment>
<comment type="subcellular location">
    <subcellularLocation>
        <location evidence="1">Plastid</location>
        <location evidence="1">Chloroplast thylakoid membrane</location>
        <topology evidence="1">Multi-pass membrane protein</topology>
    </subcellularLocation>
</comment>
<comment type="PTM">
    <text evidence="1">Tyr-161 forms a radical intermediate that is referred to as redox-active TyrZ, YZ or Y-Z.</text>
</comment>
<comment type="PTM">
    <text evidence="1">C-terminally processed by CTPA; processing is essential to allow assembly of the oxygen-evolving complex and thus photosynthetic growth.</text>
</comment>
<comment type="miscellaneous">
    <text evidence="1">2 of the reaction center chlorophylls (ChlD1 and ChlD2) are entirely coordinated by water.</text>
</comment>
<comment type="miscellaneous">
    <text evidence="1">Herbicides such as atrazine, BNT, diuron or ioxynil bind in the Q(B) binding site and block subsequent electron transfer.</text>
</comment>
<comment type="similarity">
    <text evidence="1">Belongs to the reaction center PufL/M/PsbA/D family.</text>
</comment>
<geneLocation type="chloroplast"/>
<feature type="initiator methionine" description="Removed" evidence="1">
    <location>
        <position position="1"/>
    </location>
</feature>
<feature type="chain" id="PRO_0000339972" description="Photosystem II protein D1" evidence="1">
    <location>
        <begin position="2"/>
        <end position="344"/>
    </location>
</feature>
<feature type="propeptide" id="PRO_0000339973" evidence="1">
    <location>
        <begin position="345"/>
        <end position="353"/>
    </location>
</feature>
<feature type="transmembrane region" description="Helical" evidence="1">
    <location>
        <begin position="29"/>
        <end position="46"/>
    </location>
</feature>
<feature type="transmembrane region" description="Helical" evidence="1">
    <location>
        <begin position="118"/>
        <end position="133"/>
    </location>
</feature>
<feature type="transmembrane region" description="Helical" evidence="1">
    <location>
        <begin position="142"/>
        <end position="156"/>
    </location>
</feature>
<feature type="transmembrane region" description="Helical" evidence="1">
    <location>
        <begin position="197"/>
        <end position="218"/>
    </location>
</feature>
<feature type="transmembrane region" description="Helical" evidence="1">
    <location>
        <begin position="274"/>
        <end position="288"/>
    </location>
</feature>
<feature type="binding site" description="axial binding residue" evidence="1">
    <location>
        <position position="118"/>
    </location>
    <ligand>
        <name>chlorophyll a</name>
        <dbReference type="ChEBI" id="CHEBI:58416"/>
        <label>ChlzD1</label>
    </ligand>
    <ligandPart>
        <name>Mg</name>
        <dbReference type="ChEBI" id="CHEBI:25107"/>
    </ligandPart>
</feature>
<feature type="binding site" evidence="1">
    <location>
        <position position="126"/>
    </location>
    <ligand>
        <name>pheophytin a</name>
        <dbReference type="ChEBI" id="CHEBI:136840"/>
        <label>D1</label>
    </ligand>
</feature>
<feature type="binding site" evidence="1">
    <location>
        <position position="170"/>
    </location>
    <ligand>
        <name>[CaMn4O5] cluster</name>
        <dbReference type="ChEBI" id="CHEBI:189552"/>
    </ligand>
</feature>
<feature type="binding site" evidence="1">
    <location>
        <position position="189"/>
    </location>
    <ligand>
        <name>[CaMn4O5] cluster</name>
        <dbReference type="ChEBI" id="CHEBI:189552"/>
    </ligand>
</feature>
<feature type="binding site" description="axial binding residue" evidence="1">
    <location>
        <position position="198"/>
    </location>
    <ligand>
        <name>chlorophyll a</name>
        <dbReference type="ChEBI" id="CHEBI:58416"/>
        <label>PD1</label>
    </ligand>
    <ligandPart>
        <name>Mg</name>
        <dbReference type="ChEBI" id="CHEBI:25107"/>
    </ligandPart>
</feature>
<feature type="binding site" evidence="1">
    <location>
        <position position="215"/>
    </location>
    <ligand>
        <name>a quinone</name>
        <dbReference type="ChEBI" id="CHEBI:132124"/>
        <label>B</label>
    </ligand>
</feature>
<feature type="binding site" evidence="1">
    <location>
        <position position="215"/>
    </location>
    <ligand>
        <name>Fe cation</name>
        <dbReference type="ChEBI" id="CHEBI:24875"/>
        <note>ligand shared with heterodimeric partner</note>
    </ligand>
</feature>
<feature type="binding site" evidence="1">
    <location>
        <begin position="264"/>
        <end position="265"/>
    </location>
    <ligand>
        <name>a quinone</name>
        <dbReference type="ChEBI" id="CHEBI:132124"/>
        <label>B</label>
    </ligand>
</feature>
<feature type="binding site" evidence="1">
    <location>
        <position position="272"/>
    </location>
    <ligand>
        <name>Fe cation</name>
        <dbReference type="ChEBI" id="CHEBI:24875"/>
        <note>ligand shared with heterodimeric partner</note>
    </ligand>
</feature>
<feature type="binding site" evidence="1">
    <location>
        <position position="332"/>
    </location>
    <ligand>
        <name>[CaMn4O5] cluster</name>
        <dbReference type="ChEBI" id="CHEBI:189552"/>
    </ligand>
</feature>
<feature type="binding site" evidence="1">
    <location>
        <position position="333"/>
    </location>
    <ligand>
        <name>[CaMn4O5] cluster</name>
        <dbReference type="ChEBI" id="CHEBI:189552"/>
    </ligand>
</feature>
<feature type="binding site" evidence="1">
    <location>
        <position position="342"/>
    </location>
    <ligand>
        <name>[CaMn4O5] cluster</name>
        <dbReference type="ChEBI" id="CHEBI:189552"/>
    </ligand>
</feature>
<feature type="binding site" evidence="1">
    <location>
        <position position="344"/>
    </location>
    <ligand>
        <name>[CaMn4O5] cluster</name>
        <dbReference type="ChEBI" id="CHEBI:189552"/>
    </ligand>
</feature>
<feature type="site" description="Tyrosine radical intermediate" evidence="1">
    <location>
        <position position="161"/>
    </location>
</feature>
<feature type="site" description="Stabilizes free radical intermediate" evidence="1">
    <location>
        <position position="190"/>
    </location>
</feature>
<feature type="site" description="Cleavage; by CTPA" evidence="1">
    <location>
        <begin position="344"/>
        <end position="345"/>
    </location>
</feature>
<feature type="modified residue" description="N-acetylthreonine" evidence="1">
    <location>
        <position position="2"/>
    </location>
</feature>
<feature type="modified residue" description="Phosphothreonine" evidence="1">
    <location>
        <position position="2"/>
    </location>
</feature>
<name>PSBA_CITSI</name>
<organism>
    <name type="scientific">Citrus sinensis</name>
    <name type="common">Sweet orange</name>
    <name type="synonym">Citrus aurantium var. sinensis</name>
    <dbReference type="NCBI Taxonomy" id="2711"/>
    <lineage>
        <taxon>Eukaryota</taxon>
        <taxon>Viridiplantae</taxon>
        <taxon>Streptophyta</taxon>
        <taxon>Embryophyta</taxon>
        <taxon>Tracheophyta</taxon>
        <taxon>Spermatophyta</taxon>
        <taxon>Magnoliopsida</taxon>
        <taxon>eudicotyledons</taxon>
        <taxon>Gunneridae</taxon>
        <taxon>Pentapetalae</taxon>
        <taxon>rosids</taxon>
        <taxon>malvids</taxon>
        <taxon>Sapindales</taxon>
        <taxon>Rutaceae</taxon>
        <taxon>Aurantioideae</taxon>
        <taxon>Citrus</taxon>
    </lineage>
</organism>
<sequence length="353" mass="38962">MTAILERRESERLWGRFCNWITSTENRLYIGWFGVLMIPTLLTATSVFIIAFIAAPPVDIDGIREPVSGSLLYGNNIISGAIIPTSAAIGLHFYPIWEAASVDEWLYNGGPYELIVLHFLLGVACYMGREWELSFRLGMRPWIAVAYSAPVAAATAVFLIYPIGQGSFSDGMPLGISGTFNFMIVFQAEHNILMHPFHMLGVAGVFGGSLFSAMHGSLVTSSLIRETTENESANAGYRFGQEEETYNIVAAHGYFGRLIFQYASFNNSRSLHFFLAAWPVVGIWFTALGISTMAFNLNGFNFNQSVVDSQGRVINTWADIINRANLGMEVMHERNAHNFPLDLAAIEAPSTNG</sequence>
<protein>
    <recommendedName>
        <fullName evidence="1">Photosystem II protein D1</fullName>
        <shortName evidence="1">PSII D1 protein</shortName>
        <ecNumber evidence="1">1.10.3.9</ecNumber>
    </recommendedName>
    <alternativeName>
        <fullName evidence="1">Photosystem II Q(B) protein</fullName>
    </alternativeName>
</protein>
<gene>
    <name evidence="1" type="primary">psbA</name>
</gene>
<evidence type="ECO:0000255" key="1">
    <source>
        <dbReference type="HAMAP-Rule" id="MF_01379"/>
    </source>
</evidence>
<proteinExistence type="inferred from homology"/>
<accession>Q09MJ8</accession>